<evidence type="ECO:0000255" key="1">
    <source>
        <dbReference type="HAMAP-Rule" id="MF_01553"/>
    </source>
</evidence>
<protein>
    <recommendedName>
        <fullName evidence="1">DNA-directed RNA polymerase subunit epsilon</fullName>
        <shortName evidence="1">RNAP epsilon subunit</shortName>
        <ecNumber evidence="1">2.7.7.6</ecNumber>
    </recommendedName>
    <alternativeName>
        <fullName evidence="1">RNA polymerase epsilon subunit</fullName>
    </alternativeName>
    <alternativeName>
        <fullName evidence="1">Transcriptase subunit epsilon</fullName>
    </alternativeName>
</protein>
<organism>
    <name type="scientific">Geobacillus sp. (strain WCH70)</name>
    <dbReference type="NCBI Taxonomy" id="471223"/>
    <lineage>
        <taxon>Bacteria</taxon>
        <taxon>Bacillati</taxon>
        <taxon>Bacillota</taxon>
        <taxon>Bacilli</taxon>
        <taxon>Bacillales</taxon>
        <taxon>Anoxybacillaceae</taxon>
        <taxon>Geobacillus</taxon>
    </lineage>
</organism>
<sequence length="69" mass="8311">MIFKVFYQENPDEVPVREKTKTLYIEAESEREVRQKLQGHTMNIEYIQPLEGAHLEYEKKNPDFKVLEI</sequence>
<name>RPOY_GEOSW</name>
<gene>
    <name evidence="1" type="primary">rpoY</name>
    <name type="ordered locus">GWCH70_0948</name>
</gene>
<comment type="function">
    <text evidence="1">A non-essential component of RNA polymerase (RNAP).</text>
</comment>
<comment type="catalytic activity">
    <reaction evidence="1">
        <text>RNA(n) + a ribonucleoside 5'-triphosphate = RNA(n+1) + diphosphate</text>
        <dbReference type="Rhea" id="RHEA:21248"/>
        <dbReference type="Rhea" id="RHEA-COMP:14527"/>
        <dbReference type="Rhea" id="RHEA-COMP:17342"/>
        <dbReference type="ChEBI" id="CHEBI:33019"/>
        <dbReference type="ChEBI" id="CHEBI:61557"/>
        <dbReference type="ChEBI" id="CHEBI:140395"/>
        <dbReference type="EC" id="2.7.7.6"/>
    </reaction>
</comment>
<comment type="subunit">
    <text evidence="1">RNAP is composed of a core of 2 alpha, a beta and a beta' subunit. The core is associated with a delta subunit, and at least one of epsilon or omega. When a sigma factor is associated with the core the holoenzyme is formed, which can initiate transcription.</text>
</comment>
<comment type="similarity">
    <text evidence="1">Belongs to the RNA polymerase subunit epsilon family.</text>
</comment>
<proteinExistence type="inferred from homology"/>
<reference key="1">
    <citation type="submission" date="2009-06" db="EMBL/GenBank/DDBJ databases">
        <title>Complete sequence of chromosome of Geopacillus sp. WCH70.</title>
        <authorList>
            <consortium name="US DOE Joint Genome Institute"/>
            <person name="Lucas S."/>
            <person name="Copeland A."/>
            <person name="Lapidus A."/>
            <person name="Glavina del Rio T."/>
            <person name="Dalin E."/>
            <person name="Tice H."/>
            <person name="Bruce D."/>
            <person name="Goodwin L."/>
            <person name="Pitluck S."/>
            <person name="Chertkov O."/>
            <person name="Brettin T."/>
            <person name="Detter J.C."/>
            <person name="Han C."/>
            <person name="Larimer F."/>
            <person name="Land M."/>
            <person name="Hauser L."/>
            <person name="Kyrpides N."/>
            <person name="Mikhailova N."/>
            <person name="Brumm P."/>
            <person name="Mead D.A."/>
            <person name="Richardson P."/>
        </authorList>
    </citation>
    <scope>NUCLEOTIDE SEQUENCE [LARGE SCALE GENOMIC DNA]</scope>
    <source>
        <strain>WCH70</strain>
    </source>
</reference>
<accession>C5D830</accession>
<dbReference type="EC" id="2.7.7.6" evidence="1"/>
<dbReference type="EMBL" id="CP001638">
    <property type="protein sequence ID" value="ACS23811.1"/>
    <property type="molecule type" value="Genomic_DNA"/>
</dbReference>
<dbReference type="SMR" id="C5D830"/>
<dbReference type="STRING" id="471223.GWCH70_0948"/>
<dbReference type="KEGG" id="gwc:GWCH70_0948"/>
<dbReference type="eggNOG" id="COG5503">
    <property type="taxonomic scope" value="Bacteria"/>
</dbReference>
<dbReference type="HOGENOM" id="CLU_187518_1_0_9"/>
<dbReference type="OrthoDB" id="2147503at2"/>
<dbReference type="GO" id="GO:0000428">
    <property type="term" value="C:DNA-directed RNA polymerase complex"/>
    <property type="evidence" value="ECO:0007669"/>
    <property type="project" value="UniProtKB-KW"/>
</dbReference>
<dbReference type="GO" id="GO:0003677">
    <property type="term" value="F:DNA binding"/>
    <property type="evidence" value="ECO:0007669"/>
    <property type="project" value="UniProtKB-UniRule"/>
</dbReference>
<dbReference type="GO" id="GO:0003899">
    <property type="term" value="F:DNA-directed RNA polymerase activity"/>
    <property type="evidence" value="ECO:0007669"/>
    <property type="project" value="UniProtKB-UniRule"/>
</dbReference>
<dbReference type="GO" id="GO:0006351">
    <property type="term" value="P:DNA-templated transcription"/>
    <property type="evidence" value="ECO:0007669"/>
    <property type="project" value="UniProtKB-UniRule"/>
</dbReference>
<dbReference type="Gene3D" id="3.10.20.730">
    <property type="entry name" value="RNAP, epsilon subunit-like"/>
    <property type="match status" value="1"/>
</dbReference>
<dbReference type="HAMAP" id="MF_01553">
    <property type="entry name" value="RNApol_bact_RpoY"/>
    <property type="match status" value="1"/>
</dbReference>
<dbReference type="InterPro" id="IPR009907">
    <property type="entry name" value="RpoY"/>
</dbReference>
<dbReference type="NCBIfam" id="NF010188">
    <property type="entry name" value="PRK13667.1"/>
    <property type="match status" value="1"/>
</dbReference>
<dbReference type="Pfam" id="PF07288">
    <property type="entry name" value="RpoY"/>
    <property type="match status" value="1"/>
</dbReference>
<keyword id="KW-0240">DNA-directed RNA polymerase</keyword>
<keyword id="KW-0548">Nucleotidyltransferase</keyword>
<keyword id="KW-0804">Transcription</keyword>
<keyword id="KW-0808">Transferase</keyword>
<feature type="chain" id="PRO_1000215479" description="DNA-directed RNA polymerase subunit epsilon">
    <location>
        <begin position="1"/>
        <end position="69"/>
    </location>
</feature>